<reference key="1">
    <citation type="journal article" date="1996" name="Copeia">
        <title>Crotaline intergeneric relationships based on mitochondrial DNA sequence data.</title>
        <authorList>
            <person name="Kraus F."/>
            <person name="Mink D.G."/>
            <person name="Brown W.M."/>
        </authorList>
    </citation>
    <scope>NUCLEOTIDE SEQUENCE [GENOMIC DNA]</scope>
</reference>
<keyword id="KW-0249">Electron transport</keyword>
<keyword id="KW-0472">Membrane</keyword>
<keyword id="KW-0496">Mitochondrion</keyword>
<keyword id="KW-0520">NAD</keyword>
<keyword id="KW-0679">Respiratory chain</keyword>
<keyword id="KW-1278">Translocase</keyword>
<keyword id="KW-0812">Transmembrane</keyword>
<keyword id="KW-1133">Transmembrane helix</keyword>
<keyword id="KW-0813">Transport</keyword>
<keyword id="KW-0830">Ubiquinone</keyword>
<evidence type="ECO:0000250" key="1"/>
<evidence type="ECO:0000255" key="2"/>
<evidence type="ECO:0000305" key="3"/>
<gene>
    <name type="primary">MT-ND4</name>
    <name type="synonym">MTND4</name>
    <name type="synonym">NADH4</name>
    <name type="synonym">ND4</name>
</gene>
<organism>
    <name type="scientific">Crotalus lepidus</name>
    <name type="common">Banded rock rattlesnake</name>
    <name type="synonym">Caudisonia lepida</name>
    <dbReference type="NCBI Taxonomy" id="44709"/>
    <lineage>
        <taxon>Eukaryota</taxon>
        <taxon>Metazoa</taxon>
        <taxon>Chordata</taxon>
        <taxon>Craniata</taxon>
        <taxon>Vertebrata</taxon>
        <taxon>Euteleostomi</taxon>
        <taxon>Lepidosauria</taxon>
        <taxon>Squamata</taxon>
        <taxon>Bifurcata</taxon>
        <taxon>Unidentata</taxon>
        <taxon>Episquamata</taxon>
        <taxon>Toxicofera</taxon>
        <taxon>Serpentes</taxon>
        <taxon>Colubroidea</taxon>
        <taxon>Viperidae</taxon>
        <taxon>Crotalinae</taxon>
        <taxon>Crotalus</taxon>
    </lineage>
</organism>
<sequence length="231" mass="25485">PIAGSMVLAAILLKLGGYGIIRMMQIFPTTKTDLFLPFIVLALWGAILANLTCLQQTDLKSLIAYSSISHMGLVVAAIIIQTPWGLSGAMALMIAHGFTSSALFCLANMTYERTHTRILILTRGLHNTLPMATTWWLMTNLMNIAIPPSMNFTGELLIMSSLFNWCPTTIIILGLSMLITASYSLHMFLSTQMGPTLLNNQTEPTHSREHLLMTLHLVPLLMISMKPELVI</sequence>
<protein>
    <recommendedName>
        <fullName>NADH-ubiquinone oxidoreductase chain 4</fullName>
        <ecNumber>7.1.1.2</ecNumber>
    </recommendedName>
    <alternativeName>
        <fullName>NADH dehydrogenase subunit 4</fullName>
    </alternativeName>
</protein>
<feature type="chain" id="PRO_0000117925" description="NADH-ubiquinone oxidoreductase chain 4">
    <location>
        <begin position="1" status="less than"/>
        <end position="231" status="greater than"/>
    </location>
</feature>
<feature type="transmembrane region" description="Helical" evidence="2">
    <location>
        <begin position="1"/>
        <end position="21"/>
    </location>
</feature>
<feature type="transmembrane region" description="Helical" evidence="2">
    <location>
        <begin position="34"/>
        <end position="54"/>
    </location>
</feature>
<feature type="transmembrane region" description="Helical" evidence="2">
    <location>
        <begin position="63"/>
        <end position="85"/>
    </location>
</feature>
<feature type="transmembrane region" description="Helical" evidence="2">
    <location>
        <begin position="89"/>
        <end position="111"/>
    </location>
</feature>
<feature type="transmembrane region" description="Helical" evidence="2">
    <location>
        <begin position="124"/>
        <end position="146"/>
    </location>
</feature>
<feature type="transmembrane region" description="Helical" evidence="2">
    <location>
        <begin position="169"/>
        <end position="189"/>
    </location>
</feature>
<feature type="non-terminal residue">
    <location>
        <position position="1"/>
    </location>
</feature>
<feature type="non-terminal residue">
    <location>
        <position position="231"/>
    </location>
</feature>
<dbReference type="EC" id="7.1.1.2"/>
<dbReference type="EMBL" id="U41881">
    <property type="protein sequence ID" value="AAB46639.1"/>
    <property type="molecule type" value="Genomic_DNA"/>
</dbReference>
<dbReference type="SMR" id="O03704"/>
<dbReference type="GO" id="GO:0031966">
    <property type="term" value="C:mitochondrial membrane"/>
    <property type="evidence" value="ECO:0007669"/>
    <property type="project" value="UniProtKB-SubCell"/>
</dbReference>
<dbReference type="GO" id="GO:0008137">
    <property type="term" value="F:NADH dehydrogenase (ubiquinone) activity"/>
    <property type="evidence" value="ECO:0007669"/>
    <property type="project" value="UniProtKB-EC"/>
</dbReference>
<dbReference type="GO" id="GO:0048039">
    <property type="term" value="F:ubiquinone binding"/>
    <property type="evidence" value="ECO:0007669"/>
    <property type="project" value="TreeGrafter"/>
</dbReference>
<dbReference type="GO" id="GO:0042773">
    <property type="term" value="P:ATP synthesis coupled electron transport"/>
    <property type="evidence" value="ECO:0007669"/>
    <property type="project" value="InterPro"/>
</dbReference>
<dbReference type="GO" id="GO:0015990">
    <property type="term" value="P:electron transport coupled proton transport"/>
    <property type="evidence" value="ECO:0007669"/>
    <property type="project" value="TreeGrafter"/>
</dbReference>
<dbReference type="InterPro" id="IPR003918">
    <property type="entry name" value="NADH_UbQ_OxRdtase"/>
</dbReference>
<dbReference type="InterPro" id="IPR001750">
    <property type="entry name" value="ND/Mrp_TM"/>
</dbReference>
<dbReference type="PANTHER" id="PTHR43507">
    <property type="entry name" value="NADH-UBIQUINONE OXIDOREDUCTASE CHAIN 4"/>
    <property type="match status" value="1"/>
</dbReference>
<dbReference type="PANTHER" id="PTHR43507:SF20">
    <property type="entry name" value="NADH-UBIQUINONE OXIDOREDUCTASE CHAIN 4"/>
    <property type="match status" value="1"/>
</dbReference>
<dbReference type="Pfam" id="PF00361">
    <property type="entry name" value="Proton_antipo_M"/>
    <property type="match status" value="1"/>
</dbReference>
<name>NU4M_CROLE</name>
<geneLocation type="mitochondrion"/>
<proteinExistence type="inferred from homology"/>
<comment type="function">
    <text evidence="1">Core subunit of the mitochondrial membrane respiratory chain NADH dehydrogenase (Complex I) that is believed to belong to the minimal assembly required for catalysis. Complex I functions in the transfer of electrons from NADH to the respiratory chain. The immediate electron acceptor for the enzyme is believed to be ubiquinone (By similarity).</text>
</comment>
<comment type="catalytic activity">
    <reaction>
        <text>a ubiquinone + NADH + 5 H(+)(in) = a ubiquinol + NAD(+) + 4 H(+)(out)</text>
        <dbReference type="Rhea" id="RHEA:29091"/>
        <dbReference type="Rhea" id="RHEA-COMP:9565"/>
        <dbReference type="Rhea" id="RHEA-COMP:9566"/>
        <dbReference type="ChEBI" id="CHEBI:15378"/>
        <dbReference type="ChEBI" id="CHEBI:16389"/>
        <dbReference type="ChEBI" id="CHEBI:17976"/>
        <dbReference type="ChEBI" id="CHEBI:57540"/>
        <dbReference type="ChEBI" id="CHEBI:57945"/>
        <dbReference type="EC" id="7.1.1.2"/>
    </reaction>
</comment>
<comment type="subcellular location">
    <subcellularLocation>
        <location evidence="1">Mitochondrion membrane</location>
        <topology evidence="1">Multi-pass membrane protein</topology>
    </subcellularLocation>
</comment>
<comment type="similarity">
    <text evidence="3">Belongs to the complex I subunit 4 family.</text>
</comment>
<accession>O03704</accession>